<reference key="1">
    <citation type="submission" date="2006-05" db="EMBL/GenBank/DDBJ databases">
        <title>Complete sequence of megaplasmid of Silicibacter sp. TM1040.</title>
        <authorList>
            <consortium name="US DOE Joint Genome Institute"/>
            <person name="Copeland A."/>
            <person name="Lucas S."/>
            <person name="Lapidus A."/>
            <person name="Barry K."/>
            <person name="Detter J.C."/>
            <person name="Glavina del Rio T."/>
            <person name="Hammon N."/>
            <person name="Israni S."/>
            <person name="Dalin E."/>
            <person name="Tice H."/>
            <person name="Pitluck S."/>
            <person name="Brettin T."/>
            <person name="Bruce D."/>
            <person name="Han C."/>
            <person name="Tapia R."/>
            <person name="Goodwin L."/>
            <person name="Thompson L.S."/>
            <person name="Gilna P."/>
            <person name="Schmutz J."/>
            <person name="Larimer F."/>
            <person name="Land M."/>
            <person name="Hauser L."/>
            <person name="Kyrpides N."/>
            <person name="Kim E."/>
            <person name="Belas R."/>
            <person name="Moran M.A."/>
            <person name="Buchan A."/>
            <person name="Gonzalez J.M."/>
            <person name="Schell M.A."/>
            <person name="Sun F."/>
            <person name="Richardson P."/>
        </authorList>
    </citation>
    <scope>NUCLEOTIDE SEQUENCE [LARGE SCALE GENOMIC DNA]</scope>
    <source>
        <strain>TM1040</strain>
    </source>
</reference>
<sequence length="249" mass="26841">MRLVSLRNATIRHSGTPALENVDFHIDRGEIVTILGPNGSGKSTLLRSIIGALPLSSGTVERAQDLRIGYVPQKLHIDPTLPLTVERFLSLPVRISKTETENALAEAGVPGLRKRQMTGLSGGQMQRVLLARALLSKPDLLILDEATQGLDQPGSAAFYQKIASVRSQIGCAVLMVSHELHVVMAASDRVICLNGHVCCEGAPAQVASAPEYQALFGSGTHGALALYRHEHDHSHDCDHDHAKDEHEHA</sequence>
<comment type="function">
    <text evidence="1">Part of the ABC transporter complex ZnuABC involved in zinc import. Responsible for energy coupling to the transport system.</text>
</comment>
<comment type="catalytic activity">
    <reaction evidence="1">
        <text>Zn(2+)(out) + ATP(in) + H2O(in) = Zn(2+)(in) + ADP(in) + phosphate(in) + H(+)(in)</text>
        <dbReference type="Rhea" id="RHEA:29795"/>
        <dbReference type="ChEBI" id="CHEBI:15377"/>
        <dbReference type="ChEBI" id="CHEBI:15378"/>
        <dbReference type="ChEBI" id="CHEBI:29105"/>
        <dbReference type="ChEBI" id="CHEBI:30616"/>
        <dbReference type="ChEBI" id="CHEBI:43474"/>
        <dbReference type="ChEBI" id="CHEBI:456216"/>
        <dbReference type="EC" id="7.2.2.20"/>
    </reaction>
</comment>
<comment type="subunit">
    <text evidence="1">The complex is composed of two ATP-binding proteins (ZnuC), two transmembrane proteins (ZnuB) and a solute-binding protein (ZnuA).</text>
</comment>
<comment type="subcellular location">
    <subcellularLocation>
        <location evidence="1">Cell inner membrane</location>
        <topology evidence="1">Peripheral membrane protein</topology>
    </subcellularLocation>
</comment>
<comment type="similarity">
    <text evidence="1">Belongs to the ABC transporter superfamily. Zinc importer (TC 3.A.1.15.5) family.</text>
</comment>
<accession>Q1GL85</accession>
<proteinExistence type="inferred from homology"/>
<keyword id="KW-0067">ATP-binding</keyword>
<keyword id="KW-0997">Cell inner membrane</keyword>
<keyword id="KW-1003">Cell membrane</keyword>
<keyword id="KW-0406">Ion transport</keyword>
<keyword id="KW-0472">Membrane</keyword>
<keyword id="KW-0547">Nucleotide-binding</keyword>
<keyword id="KW-0614">Plasmid</keyword>
<keyword id="KW-1185">Reference proteome</keyword>
<keyword id="KW-1278">Translocase</keyword>
<keyword id="KW-0813">Transport</keyword>
<keyword id="KW-0862">Zinc</keyword>
<keyword id="KW-0864">Zinc transport</keyword>
<evidence type="ECO:0000255" key="1">
    <source>
        <dbReference type="HAMAP-Rule" id="MF_01725"/>
    </source>
</evidence>
<dbReference type="EC" id="7.2.2.20" evidence="1"/>
<dbReference type="EMBL" id="CP000376">
    <property type="protein sequence ID" value="ABF62581.1"/>
    <property type="molecule type" value="Genomic_DNA"/>
</dbReference>
<dbReference type="RefSeq" id="WP_011537220.1">
    <property type="nucleotide sequence ID" value="NC_008043.1"/>
</dbReference>
<dbReference type="SMR" id="Q1GL85"/>
<dbReference type="KEGG" id="sit:TM1040_3614"/>
<dbReference type="HOGENOM" id="CLU_000604_1_11_5"/>
<dbReference type="OrthoDB" id="9806726at2"/>
<dbReference type="Proteomes" id="UP000000636">
    <property type="component" value="Plasmid megaplasmid TM1040"/>
</dbReference>
<dbReference type="GO" id="GO:0005886">
    <property type="term" value="C:plasma membrane"/>
    <property type="evidence" value="ECO:0007669"/>
    <property type="project" value="UniProtKB-SubCell"/>
</dbReference>
<dbReference type="GO" id="GO:0015633">
    <property type="term" value="F:ABC-type zinc transporter activity"/>
    <property type="evidence" value="ECO:0007669"/>
    <property type="project" value="UniProtKB-EC"/>
</dbReference>
<dbReference type="GO" id="GO:0005524">
    <property type="term" value="F:ATP binding"/>
    <property type="evidence" value="ECO:0007669"/>
    <property type="project" value="UniProtKB-KW"/>
</dbReference>
<dbReference type="GO" id="GO:0016887">
    <property type="term" value="F:ATP hydrolysis activity"/>
    <property type="evidence" value="ECO:0007669"/>
    <property type="project" value="InterPro"/>
</dbReference>
<dbReference type="GO" id="GO:0010043">
    <property type="term" value="P:response to zinc ion"/>
    <property type="evidence" value="ECO:0007669"/>
    <property type="project" value="TreeGrafter"/>
</dbReference>
<dbReference type="Gene3D" id="3.40.50.300">
    <property type="entry name" value="P-loop containing nucleotide triphosphate hydrolases"/>
    <property type="match status" value="1"/>
</dbReference>
<dbReference type="InterPro" id="IPR003593">
    <property type="entry name" value="AAA+_ATPase"/>
</dbReference>
<dbReference type="InterPro" id="IPR003439">
    <property type="entry name" value="ABC_transporter-like_ATP-bd"/>
</dbReference>
<dbReference type="InterPro" id="IPR017871">
    <property type="entry name" value="ABC_transporter-like_CS"/>
</dbReference>
<dbReference type="InterPro" id="IPR050153">
    <property type="entry name" value="Metal_Ion_Import_ABC"/>
</dbReference>
<dbReference type="InterPro" id="IPR027417">
    <property type="entry name" value="P-loop_NTPase"/>
</dbReference>
<dbReference type="PANTHER" id="PTHR42734">
    <property type="entry name" value="METAL TRANSPORT SYSTEM ATP-BINDING PROTEIN TM_0124-RELATED"/>
    <property type="match status" value="1"/>
</dbReference>
<dbReference type="PANTHER" id="PTHR42734:SF9">
    <property type="entry name" value="ZINC IMPORT ATP-BINDING PROTEIN ZNUC"/>
    <property type="match status" value="1"/>
</dbReference>
<dbReference type="Pfam" id="PF00005">
    <property type="entry name" value="ABC_tran"/>
    <property type="match status" value="1"/>
</dbReference>
<dbReference type="SMART" id="SM00382">
    <property type="entry name" value="AAA"/>
    <property type="match status" value="1"/>
</dbReference>
<dbReference type="SUPFAM" id="SSF52540">
    <property type="entry name" value="P-loop containing nucleoside triphosphate hydrolases"/>
    <property type="match status" value="1"/>
</dbReference>
<dbReference type="PROSITE" id="PS00211">
    <property type="entry name" value="ABC_TRANSPORTER_1"/>
    <property type="match status" value="1"/>
</dbReference>
<dbReference type="PROSITE" id="PS50893">
    <property type="entry name" value="ABC_TRANSPORTER_2"/>
    <property type="match status" value="1"/>
</dbReference>
<dbReference type="PROSITE" id="PS51298">
    <property type="entry name" value="ZNUC"/>
    <property type="match status" value="1"/>
</dbReference>
<organism>
    <name type="scientific">Ruegeria sp. (strain TM1040)</name>
    <name type="common">Silicibacter sp.</name>
    <dbReference type="NCBI Taxonomy" id="292414"/>
    <lineage>
        <taxon>Bacteria</taxon>
        <taxon>Pseudomonadati</taxon>
        <taxon>Pseudomonadota</taxon>
        <taxon>Alphaproteobacteria</taxon>
        <taxon>Rhodobacterales</taxon>
        <taxon>Roseobacteraceae</taxon>
        <taxon>Ruegeria</taxon>
    </lineage>
</organism>
<protein>
    <recommendedName>
        <fullName evidence="1">Zinc import ATP-binding protein ZnuC</fullName>
        <ecNumber evidence="1">7.2.2.20</ecNumber>
    </recommendedName>
</protein>
<gene>
    <name evidence="1" type="primary">znuC</name>
    <name type="ordered locus">TM1040_3614</name>
</gene>
<feature type="chain" id="PRO_0000281556" description="Zinc import ATP-binding protein ZnuC">
    <location>
        <begin position="1"/>
        <end position="249"/>
    </location>
</feature>
<feature type="domain" description="ABC transporter" evidence="1">
    <location>
        <begin position="1"/>
        <end position="219"/>
    </location>
</feature>
<feature type="binding site" evidence="1">
    <location>
        <begin position="36"/>
        <end position="43"/>
    </location>
    <ligand>
        <name>ATP</name>
        <dbReference type="ChEBI" id="CHEBI:30616"/>
    </ligand>
</feature>
<geneLocation type="plasmid">
    <name>megaplasmid</name>
</geneLocation>
<name>ZNUC_RUEST</name>